<name>CYB_SORCO</name>
<organism>
    <name type="scientific">Sorex coronatus</name>
    <name type="common">Crowned shrew</name>
    <name type="synonym">French shrew</name>
    <dbReference type="NCBI Taxonomy" id="62895"/>
    <lineage>
        <taxon>Eukaryota</taxon>
        <taxon>Metazoa</taxon>
        <taxon>Chordata</taxon>
        <taxon>Craniata</taxon>
        <taxon>Vertebrata</taxon>
        <taxon>Euteleostomi</taxon>
        <taxon>Mammalia</taxon>
        <taxon>Eutheria</taxon>
        <taxon>Laurasiatheria</taxon>
        <taxon>Eulipotyphla</taxon>
        <taxon>Soricidae</taxon>
        <taxon>Soricinae</taxon>
        <taxon>Sorex</taxon>
    </lineage>
</organism>
<proteinExistence type="inferred from homology"/>
<sequence length="379" mass="42629">MTNLRKTHPLMKIVNSSFIDLPAPSNISSWWNFGSLLGVCLIIQILTGLFLAMHYTSDTMTAFSSVTHICRDVNYGWLIRYLHANGASMFFICLFLHVGRGLYYGSYMYLETWNIGVLLLFAVMATAFMGYVLPWGQMSFWGATVITNLLSAIPYIGSDLVEWIWGGFSVDKATLTRFFAFHFILPFIIAALAGVHLLFLHETGSNNPSGLCSDADKIPFHPYYTIKDILGVLLLILALTSLVLFSPDLLGDPDNYTPANPLNTPPHIKPEWYFLFAYAILWSIPNKLGGVLALVLSILILAVVPFLHTSKQRSMMFRPFSQCLFWILVADLLTLTWIGGQPVEHPFIIIGQLASILYFLLILVIMPITSVFENNLLKW</sequence>
<keyword id="KW-0249">Electron transport</keyword>
<keyword id="KW-0349">Heme</keyword>
<keyword id="KW-0408">Iron</keyword>
<keyword id="KW-0472">Membrane</keyword>
<keyword id="KW-0479">Metal-binding</keyword>
<keyword id="KW-0496">Mitochondrion</keyword>
<keyword id="KW-0999">Mitochondrion inner membrane</keyword>
<keyword id="KW-0679">Respiratory chain</keyword>
<keyword id="KW-0812">Transmembrane</keyword>
<keyword id="KW-1133">Transmembrane helix</keyword>
<keyword id="KW-0813">Transport</keyword>
<keyword id="KW-0830">Ubiquinone</keyword>
<reference key="1">
    <citation type="submission" date="2002-10" db="EMBL/GenBank/DDBJ databases">
        <authorList>
            <person name="Fumagalli L."/>
        </authorList>
    </citation>
    <scope>NUCLEOTIDE SEQUENCE [GENOMIC DNA]</scope>
</reference>
<reference key="2">
    <citation type="journal article" date="1999" name="Mol. Phylogenet. Evol.">
        <title>Molecular phylogeny and evolution of Sorex shrews (Soricidae: Insectivora) inferred from mitochondrial DNA sequence data.</title>
        <authorList>
            <person name="Fumagalli L."/>
            <person name="Taberlet P."/>
            <person name="Stewart D.T."/>
            <person name="Gielly L."/>
            <person name="Hausser J."/>
            <person name="Vogel P."/>
        </authorList>
    </citation>
    <scope>NUCLEOTIDE SEQUENCE [GENOMIC DNA] OF 44-379</scope>
</reference>
<dbReference type="EMBL" id="AJ000419">
    <property type="protein sequence ID" value="CAA04067.2"/>
    <property type="molecule type" value="Genomic_DNA"/>
</dbReference>
<dbReference type="EMBL" id="AJ000420">
    <property type="protein sequence ID" value="CAA04068.1"/>
    <property type="molecule type" value="Genomic_DNA"/>
</dbReference>
<dbReference type="SMR" id="O79448"/>
<dbReference type="GO" id="GO:0005743">
    <property type="term" value="C:mitochondrial inner membrane"/>
    <property type="evidence" value="ECO:0007669"/>
    <property type="project" value="UniProtKB-SubCell"/>
</dbReference>
<dbReference type="GO" id="GO:0045275">
    <property type="term" value="C:respiratory chain complex III"/>
    <property type="evidence" value="ECO:0007669"/>
    <property type="project" value="InterPro"/>
</dbReference>
<dbReference type="GO" id="GO:0046872">
    <property type="term" value="F:metal ion binding"/>
    <property type="evidence" value="ECO:0007669"/>
    <property type="project" value="UniProtKB-KW"/>
</dbReference>
<dbReference type="GO" id="GO:0008121">
    <property type="term" value="F:ubiquinol-cytochrome-c reductase activity"/>
    <property type="evidence" value="ECO:0007669"/>
    <property type="project" value="InterPro"/>
</dbReference>
<dbReference type="GO" id="GO:0006122">
    <property type="term" value="P:mitochondrial electron transport, ubiquinol to cytochrome c"/>
    <property type="evidence" value="ECO:0007669"/>
    <property type="project" value="TreeGrafter"/>
</dbReference>
<dbReference type="CDD" id="cd00290">
    <property type="entry name" value="cytochrome_b_C"/>
    <property type="match status" value="1"/>
</dbReference>
<dbReference type="CDD" id="cd00284">
    <property type="entry name" value="Cytochrome_b_N"/>
    <property type="match status" value="1"/>
</dbReference>
<dbReference type="FunFam" id="1.20.810.10:FF:000002">
    <property type="entry name" value="Cytochrome b"/>
    <property type="match status" value="1"/>
</dbReference>
<dbReference type="Gene3D" id="1.20.810.10">
    <property type="entry name" value="Cytochrome Bc1 Complex, Chain C"/>
    <property type="match status" value="1"/>
</dbReference>
<dbReference type="InterPro" id="IPR005798">
    <property type="entry name" value="Cyt_b/b6_C"/>
</dbReference>
<dbReference type="InterPro" id="IPR036150">
    <property type="entry name" value="Cyt_b/b6_C_sf"/>
</dbReference>
<dbReference type="InterPro" id="IPR005797">
    <property type="entry name" value="Cyt_b/b6_N"/>
</dbReference>
<dbReference type="InterPro" id="IPR027387">
    <property type="entry name" value="Cytb/b6-like_sf"/>
</dbReference>
<dbReference type="InterPro" id="IPR030689">
    <property type="entry name" value="Cytochrome_b"/>
</dbReference>
<dbReference type="InterPro" id="IPR048260">
    <property type="entry name" value="Cytochrome_b_C_euk/bac"/>
</dbReference>
<dbReference type="InterPro" id="IPR048259">
    <property type="entry name" value="Cytochrome_b_N_euk/bac"/>
</dbReference>
<dbReference type="InterPro" id="IPR016174">
    <property type="entry name" value="Di-haem_cyt_TM"/>
</dbReference>
<dbReference type="PANTHER" id="PTHR19271">
    <property type="entry name" value="CYTOCHROME B"/>
    <property type="match status" value="1"/>
</dbReference>
<dbReference type="PANTHER" id="PTHR19271:SF16">
    <property type="entry name" value="CYTOCHROME B"/>
    <property type="match status" value="1"/>
</dbReference>
<dbReference type="Pfam" id="PF00032">
    <property type="entry name" value="Cytochrom_B_C"/>
    <property type="match status" value="1"/>
</dbReference>
<dbReference type="Pfam" id="PF00033">
    <property type="entry name" value="Cytochrome_B"/>
    <property type="match status" value="1"/>
</dbReference>
<dbReference type="PIRSF" id="PIRSF038885">
    <property type="entry name" value="COB"/>
    <property type="match status" value="1"/>
</dbReference>
<dbReference type="SUPFAM" id="SSF81648">
    <property type="entry name" value="a domain/subunit of cytochrome bc1 complex (Ubiquinol-cytochrome c reductase)"/>
    <property type="match status" value="1"/>
</dbReference>
<dbReference type="SUPFAM" id="SSF81342">
    <property type="entry name" value="Transmembrane di-heme cytochromes"/>
    <property type="match status" value="1"/>
</dbReference>
<dbReference type="PROSITE" id="PS51003">
    <property type="entry name" value="CYTB_CTER"/>
    <property type="match status" value="1"/>
</dbReference>
<dbReference type="PROSITE" id="PS51002">
    <property type="entry name" value="CYTB_NTER"/>
    <property type="match status" value="1"/>
</dbReference>
<evidence type="ECO:0000250" key="1"/>
<evidence type="ECO:0000250" key="2">
    <source>
        <dbReference type="UniProtKB" id="P00157"/>
    </source>
</evidence>
<evidence type="ECO:0000255" key="3">
    <source>
        <dbReference type="PROSITE-ProRule" id="PRU00967"/>
    </source>
</evidence>
<evidence type="ECO:0000255" key="4">
    <source>
        <dbReference type="PROSITE-ProRule" id="PRU00968"/>
    </source>
</evidence>
<feature type="chain" id="PRO_0000061555" description="Cytochrome b">
    <location>
        <begin position="1"/>
        <end position="379"/>
    </location>
</feature>
<feature type="transmembrane region" description="Helical" evidence="2">
    <location>
        <begin position="33"/>
        <end position="53"/>
    </location>
</feature>
<feature type="transmembrane region" description="Helical" evidence="2">
    <location>
        <begin position="77"/>
        <end position="98"/>
    </location>
</feature>
<feature type="transmembrane region" description="Helical" evidence="2">
    <location>
        <begin position="113"/>
        <end position="133"/>
    </location>
</feature>
<feature type="transmembrane region" description="Helical" evidence="2">
    <location>
        <begin position="178"/>
        <end position="198"/>
    </location>
</feature>
<feature type="transmembrane region" description="Helical" evidence="2">
    <location>
        <begin position="226"/>
        <end position="246"/>
    </location>
</feature>
<feature type="transmembrane region" description="Helical" evidence="2">
    <location>
        <begin position="288"/>
        <end position="308"/>
    </location>
</feature>
<feature type="transmembrane region" description="Helical" evidence="2">
    <location>
        <begin position="320"/>
        <end position="340"/>
    </location>
</feature>
<feature type="transmembrane region" description="Helical" evidence="2">
    <location>
        <begin position="347"/>
        <end position="367"/>
    </location>
</feature>
<feature type="binding site" description="axial binding residue" evidence="2">
    <location>
        <position position="83"/>
    </location>
    <ligand>
        <name>heme b</name>
        <dbReference type="ChEBI" id="CHEBI:60344"/>
        <label>b562</label>
    </ligand>
    <ligandPart>
        <name>Fe</name>
        <dbReference type="ChEBI" id="CHEBI:18248"/>
    </ligandPart>
</feature>
<feature type="binding site" description="axial binding residue" evidence="2">
    <location>
        <position position="97"/>
    </location>
    <ligand>
        <name>heme b</name>
        <dbReference type="ChEBI" id="CHEBI:60344"/>
        <label>b566</label>
    </ligand>
    <ligandPart>
        <name>Fe</name>
        <dbReference type="ChEBI" id="CHEBI:18248"/>
    </ligandPart>
</feature>
<feature type="binding site" description="axial binding residue" evidence="2">
    <location>
        <position position="182"/>
    </location>
    <ligand>
        <name>heme b</name>
        <dbReference type="ChEBI" id="CHEBI:60344"/>
        <label>b562</label>
    </ligand>
    <ligandPart>
        <name>Fe</name>
        <dbReference type="ChEBI" id="CHEBI:18248"/>
    </ligandPart>
</feature>
<feature type="binding site" description="axial binding residue" evidence="2">
    <location>
        <position position="196"/>
    </location>
    <ligand>
        <name>heme b</name>
        <dbReference type="ChEBI" id="CHEBI:60344"/>
        <label>b566</label>
    </ligand>
    <ligandPart>
        <name>Fe</name>
        <dbReference type="ChEBI" id="CHEBI:18248"/>
    </ligandPart>
</feature>
<feature type="binding site" evidence="2">
    <location>
        <position position="201"/>
    </location>
    <ligand>
        <name>a ubiquinone</name>
        <dbReference type="ChEBI" id="CHEBI:16389"/>
    </ligand>
</feature>
<feature type="sequence variant">
    <original>D</original>
    <variation>N</variation>
    <location>
        <position position="58"/>
    </location>
</feature>
<feature type="sequence variant">
    <original>M</original>
    <variation>K</variation>
    <location>
        <position position="129"/>
    </location>
</feature>
<feature type="sequence variant">
    <original>F</original>
    <variation>S</variation>
    <location>
        <position position="140"/>
    </location>
</feature>
<feature type="sequence variant">
    <original>H</original>
    <variation>L</variation>
    <location>
        <position position="196"/>
    </location>
</feature>
<feature type="sequence variant">
    <original>L</original>
    <variation>P</variation>
    <location>
        <position position="200"/>
    </location>
</feature>
<feature type="sequence variant">
    <original>I</original>
    <variation>F</variation>
    <location>
        <position position="229"/>
    </location>
</feature>
<feature type="sequence variant">
    <original>W</original>
    <variation>R</variation>
    <location>
        <position position="282"/>
    </location>
</feature>
<gene>
    <name type="primary">MT-CYB</name>
    <name type="synonym">COB</name>
    <name type="synonym">CYTB</name>
    <name type="synonym">MTCYB</name>
</gene>
<comment type="function">
    <text evidence="2">Component of the ubiquinol-cytochrome c reductase complex (complex III or cytochrome b-c1 complex) that is part of the mitochondrial respiratory chain. The b-c1 complex mediates electron transfer from ubiquinol to cytochrome c. Contributes to the generation of a proton gradient across the mitochondrial membrane that is then used for ATP synthesis.</text>
</comment>
<comment type="cofactor">
    <cofactor evidence="2">
        <name>heme b</name>
        <dbReference type="ChEBI" id="CHEBI:60344"/>
    </cofactor>
    <text evidence="2">Binds 2 heme b groups non-covalently.</text>
</comment>
<comment type="subunit">
    <text evidence="2">The cytochrome bc1 complex contains 11 subunits: 3 respiratory subunits (MT-CYB, CYC1 and UQCRFS1), 2 core proteins (UQCRC1 and UQCRC2) and 6 low-molecular weight proteins (UQCRH/QCR6, UQCRB/QCR7, UQCRQ/QCR8, UQCR10/QCR9, UQCR11/QCR10 and a cleavage product of UQCRFS1). This cytochrome bc1 complex then forms a dimer.</text>
</comment>
<comment type="subcellular location">
    <subcellularLocation>
        <location evidence="2">Mitochondrion inner membrane</location>
        <topology evidence="2">Multi-pass membrane protein</topology>
    </subcellularLocation>
</comment>
<comment type="miscellaneous">
    <text evidence="1">Heme 1 (or BL or b562) is low-potential and absorbs at about 562 nm, and heme 2 (or BH or b566) is high-potential and absorbs at about 566 nm.</text>
</comment>
<comment type="similarity">
    <text evidence="3 4">Belongs to the cytochrome b family.</text>
</comment>
<comment type="caution">
    <text evidence="2">The full-length protein contains only eight transmembrane helices, not nine as predicted by bioinformatics tools.</text>
</comment>
<protein>
    <recommendedName>
        <fullName>Cytochrome b</fullName>
    </recommendedName>
    <alternativeName>
        <fullName>Complex III subunit 3</fullName>
    </alternativeName>
    <alternativeName>
        <fullName>Complex III subunit III</fullName>
    </alternativeName>
    <alternativeName>
        <fullName>Cytochrome b-c1 complex subunit 3</fullName>
    </alternativeName>
    <alternativeName>
        <fullName>Ubiquinol-cytochrome-c reductase complex cytochrome b subunit</fullName>
    </alternativeName>
</protein>
<geneLocation type="mitochondrion"/>
<accession>O79448</accession>
<accession>O79449</accession>